<organism>
    <name type="scientific">Enterobacter sp. (strain 638)</name>
    <dbReference type="NCBI Taxonomy" id="399742"/>
    <lineage>
        <taxon>Bacteria</taxon>
        <taxon>Pseudomonadati</taxon>
        <taxon>Pseudomonadota</taxon>
        <taxon>Gammaproteobacteria</taxon>
        <taxon>Enterobacterales</taxon>
        <taxon>Enterobacteriaceae</taxon>
        <taxon>Enterobacter</taxon>
    </lineage>
</organism>
<feature type="chain" id="PRO_1000083721" description="Autonomous glycyl radical cofactor">
    <location>
        <begin position="1"/>
        <end position="127"/>
    </location>
</feature>
<feature type="domain" description="Glycine radical" evidence="1">
    <location>
        <begin position="5"/>
        <end position="127"/>
    </location>
</feature>
<feature type="modified residue" description="Glycine radical" evidence="1">
    <location>
        <position position="102"/>
    </location>
</feature>
<keyword id="KW-0556">Organic radical</keyword>
<sequence>MITGIQITKAANDDLLNSFWLLDSEKGEARCVVAKAGFAEDQIVPVNKLGEIEYREIPMEIQPEVRVEGGQHLNVNVLRRETLEDAVKHPEKYPQLTIRVSGYAVRFNSLTPEQQRDVIARTFTASL</sequence>
<protein>
    <recommendedName>
        <fullName evidence="1">Autonomous glycyl radical cofactor</fullName>
    </recommendedName>
</protein>
<proteinExistence type="inferred from homology"/>
<accession>A4WDE8</accession>
<name>GRCA_ENT38</name>
<evidence type="ECO:0000255" key="1">
    <source>
        <dbReference type="HAMAP-Rule" id="MF_00806"/>
    </source>
</evidence>
<reference key="1">
    <citation type="journal article" date="2010" name="PLoS Genet.">
        <title>Genome sequence of the plant growth promoting endophytic bacterium Enterobacter sp. 638.</title>
        <authorList>
            <person name="Taghavi S."/>
            <person name="van der Lelie D."/>
            <person name="Hoffman A."/>
            <person name="Zhang Y.B."/>
            <person name="Walla M.D."/>
            <person name="Vangronsveld J."/>
            <person name="Newman L."/>
            <person name="Monchy S."/>
        </authorList>
    </citation>
    <scope>NUCLEOTIDE SEQUENCE [LARGE SCALE GENOMIC DNA]</scope>
    <source>
        <strain>638</strain>
    </source>
</reference>
<dbReference type="EMBL" id="CP000653">
    <property type="protein sequence ID" value="ABP61728.1"/>
    <property type="molecule type" value="Genomic_DNA"/>
</dbReference>
<dbReference type="RefSeq" id="WP_015960058.1">
    <property type="nucleotide sequence ID" value="NC_009436.1"/>
</dbReference>
<dbReference type="SMR" id="A4WDE8"/>
<dbReference type="STRING" id="399742.Ent638_3064"/>
<dbReference type="GeneID" id="93306006"/>
<dbReference type="KEGG" id="ent:Ent638_3064"/>
<dbReference type="eggNOG" id="COG3445">
    <property type="taxonomic scope" value="Bacteria"/>
</dbReference>
<dbReference type="HOGENOM" id="CLU_133780_0_0_6"/>
<dbReference type="OrthoDB" id="9803969at2"/>
<dbReference type="Proteomes" id="UP000000230">
    <property type="component" value="Chromosome"/>
</dbReference>
<dbReference type="GO" id="GO:0005829">
    <property type="term" value="C:cytosol"/>
    <property type="evidence" value="ECO:0007669"/>
    <property type="project" value="TreeGrafter"/>
</dbReference>
<dbReference type="GO" id="GO:0008861">
    <property type="term" value="F:formate C-acetyltransferase activity"/>
    <property type="evidence" value="ECO:0007669"/>
    <property type="project" value="TreeGrafter"/>
</dbReference>
<dbReference type="FunFam" id="3.20.70.20:FF:000002">
    <property type="entry name" value="Autonomous glycyl radical cofactor"/>
    <property type="match status" value="1"/>
</dbReference>
<dbReference type="Gene3D" id="3.20.70.20">
    <property type="match status" value="1"/>
</dbReference>
<dbReference type="HAMAP" id="MF_00806">
    <property type="entry name" value="GrcA"/>
    <property type="match status" value="1"/>
</dbReference>
<dbReference type="InterPro" id="IPR050244">
    <property type="entry name" value="Auton_GlycylRad_Cofactor"/>
</dbReference>
<dbReference type="InterPro" id="IPR019777">
    <property type="entry name" value="Form_AcTrfase_GR_CS"/>
</dbReference>
<dbReference type="InterPro" id="IPR001150">
    <property type="entry name" value="Gly_radical"/>
</dbReference>
<dbReference type="InterPro" id="IPR011140">
    <property type="entry name" value="Glycyl_radical_cofactor_GrcA"/>
</dbReference>
<dbReference type="NCBIfam" id="TIGR04365">
    <property type="entry name" value="spare_glycyl"/>
    <property type="match status" value="1"/>
</dbReference>
<dbReference type="PANTHER" id="PTHR30191">
    <property type="entry name" value="FORMATE ACETYLTRANSFERASE"/>
    <property type="match status" value="1"/>
</dbReference>
<dbReference type="PANTHER" id="PTHR30191:SF0">
    <property type="entry name" value="FORMATE ACETYLTRANSFERASE 1"/>
    <property type="match status" value="1"/>
</dbReference>
<dbReference type="Pfam" id="PF01228">
    <property type="entry name" value="Gly_radical"/>
    <property type="match status" value="1"/>
</dbReference>
<dbReference type="PIRSF" id="PIRSF000378">
    <property type="entry name" value="Gly_radicl_yfiD"/>
    <property type="match status" value="1"/>
</dbReference>
<dbReference type="SUPFAM" id="SSF51998">
    <property type="entry name" value="PFL-like glycyl radical enzymes"/>
    <property type="match status" value="1"/>
</dbReference>
<dbReference type="PROSITE" id="PS00850">
    <property type="entry name" value="GLY_RADICAL_1"/>
    <property type="match status" value="1"/>
</dbReference>
<dbReference type="PROSITE" id="PS51149">
    <property type="entry name" value="GLY_RADICAL_2"/>
    <property type="match status" value="1"/>
</dbReference>
<gene>
    <name evidence="1" type="primary">grcA</name>
    <name type="ordered locus">Ent638_3064</name>
</gene>
<comment type="function">
    <text evidence="1">Acts as a radical domain for damaged PFL and possibly other radical proteins.</text>
</comment>